<accession>E5EZW7</accession>
<reference evidence="5 6" key="1">
    <citation type="journal article" date="2011" name="Insect Biochem. Mol. Biol.">
        <title>Asian corn borer pheromone binding protein 3, a candidate for evolving specificity to the 12-tetradecenyl acetate sex pheromone.</title>
        <authorList>
            <person name="Allen J.E."/>
            <person name="Wanner K.W."/>
        </authorList>
    </citation>
    <scope>NUCLEOTIDE SEQUENCE [MRNA]</scope>
    <scope>TISSUE SPECIFICITY</scope>
    <source>
        <tissue evidence="4">Antenna</tissue>
    </source>
</reference>
<evidence type="ECO:0000250" key="1">
    <source>
        <dbReference type="UniProtKB" id="O02351"/>
    </source>
</evidence>
<evidence type="ECO:0000250" key="2">
    <source>
        <dbReference type="UniProtKB" id="P26201"/>
    </source>
</evidence>
<evidence type="ECO:0000255" key="3"/>
<evidence type="ECO:0000269" key="4">
    <source>
    </source>
</evidence>
<evidence type="ECO:0000305" key="5"/>
<evidence type="ECO:0000312" key="6">
    <source>
        <dbReference type="EMBL" id="ADQ73894.1"/>
    </source>
</evidence>
<comment type="function">
    <text evidence="1">Plays an olfactory role that is not restricted to pheromone sensitivity.</text>
</comment>
<comment type="subcellular location">
    <subcellularLocation>
        <location evidence="1">Cell membrane</location>
        <topology evidence="1">Multi-pass membrane protein</topology>
    </subcellularLocation>
</comment>
<comment type="tissue specificity">
    <text evidence="4">Detected in both male and female antennal tissues. Expression is two to three fold higher in male compared to female antenna.</text>
</comment>
<comment type="similarity">
    <text evidence="5">Belongs to the CD36 family.</text>
</comment>
<protein>
    <recommendedName>
        <fullName evidence="6">Sensory neuron membrane protein 1</fullName>
    </recommendedName>
</protein>
<proteinExistence type="evidence at transcript level"/>
<gene>
    <name evidence="6" type="primary">Snmp1</name>
</gene>
<dbReference type="EMBL" id="HM044390">
    <property type="protein sequence ID" value="ADQ73894.1"/>
    <property type="molecule type" value="mRNA"/>
</dbReference>
<dbReference type="SMR" id="E5EZW7"/>
<dbReference type="GlyCosmos" id="E5EZW7">
    <property type="glycosylation" value="3 sites, No reported glycans"/>
</dbReference>
<dbReference type="GO" id="GO:0005737">
    <property type="term" value="C:cytoplasm"/>
    <property type="evidence" value="ECO:0007669"/>
    <property type="project" value="TreeGrafter"/>
</dbReference>
<dbReference type="GO" id="GO:0005886">
    <property type="term" value="C:plasma membrane"/>
    <property type="evidence" value="ECO:0007669"/>
    <property type="project" value="UniProtKB-SubCell"/>
</dbReference>
<dbReference type="GO" id="GO:0005044">
    <property type="term" value="F:scavenger receptor activity"/>
    <property type="evidence" value="ECO:0007669"/>
    <property type="project" value="TreeGrafter"/>
</dbReference>
<dbReference type="GO" id="GO:0007608">
    <property type="term" value="P:sensory perception of smell"/>
    <property type="evidence" value="ECO:0007669"/>
    <property type="project" value="UniProtKB-KW"/>
</dbReference>
<dbReference type="InterPro" id="IPR002159">
    <property type="entry name" value="CD36_fam"/>
</dbReference>
<dbReference type="PANTHER" id="PTHR11923">
    <property type="entry name" value="SCAVENGER RECEPTOR CLASS B TYPE-1 SR-B1"/>
    <property type="match status" value="1"/>
</dbReference>
<dbReference type="PANTHER" id="PTHR11923:SF69">
    <property type="entry name" value="SENSORY NEURON MEMBRANE PROTEIN 1"/>
    <property type="match status" value="1"/>
</dbReference>
<dbReference type="Pfam" id="PF01130">
    <property type="entry name" value="CD36"/>
    <property type="match status" value="1"/>
</dbReference>
<dbReference type="PRINTS" id="PR01609">
    <property type="entry name" value="CD36FAMILY"/>
</dbReference>
<keyword id="KW-1003">Cell membrane</keyword>
<keyword id="KW-1015">Disulfide bond</keyword>
<keyword id="KW-0325">Glycoprotein</keyword>
<keyword id="KW-0472">Membrane</keyword>
<keyword id="KW-0552">Olfaction</keyword>
<keyword id="KW-0675">Receptor</keyword>
<keyword id="KW-0716">Sensory transduction</keyword>
<keyword id="KW-0812">Transmembrane</keyword>
<keyword id="KW-1133">Transmembrane helix</keyword>
<name>SNMP1_OSTFU</name>
<feature type="chain" id="PRO_0000408253" description="Sensory neuron membrane protein 1">
    <location>
        <begin position="1"/>
        <end position="527"/>
    </location>
</feature>
<feature type="topological domain" description="Cytoplasmic" evidence="3">
    <location>
        <begin position="1"/>
        <end position="10"/>
    </location>
</feature>
<feature type="transmembrane region" description="Helical" evidence="3">
    <location>
        <begin position="11"/>
        <end position="31"/>
    </location>
</feature>
<feature type="topological domain" description="Extracellular" evidence="3">
    <location>
        <begin position="32"/>
        <end position="456"/>
    </location>
</feature>
<feature type="transmembrane region" description="Helical" evidence="3">
    <location>
        <begin position="457"/>
        <end position="477"/>
    </location>
</feature>
<feature type="topological domain" description="Cytoplasmic" evidence="3">
    <location>
        <begin position="478"/>
        <end position="527"/>
    </location>
</feature>
<feature type="glycosylation site" description="N-linked (GlcNAc...) asparagine" evidence="3">
    <location>
        <position position="67"/>
    </location>
</feature>
<feature type="glycosylation site" description="N-linked (GlcNAc...) asparagine" evidence="3">
    <location>
        <position position="229"/>
    </location>
</feature>
<feature type="glycosylation site" description="N-linked (GlcNAc...) asparagine" evidence="3">
    <location>
        <position position="440"/>
    </location>
</feature>
<feature type="disulfide bond" evidence="2">
    <location>
        <begin position="268"/>
        <end position="333"/>
    </location>
</feature>
<feature type="disulfide bond" evidence="2">
    <location>
        <begin position="297"/>
        <end position="352"/>
    </location>
</feature>
<feature type="disulfide bond" evidence="2">
    <location>
        <begin position="335"/>
        <end position="341"/>
    </location>
</feature>
<sequence>MQLQKPLKIGLGMMGAGLFGIIFGWVLFPVILKSQLKKEMALSKKTDVRAMWEKIPFALDFKVYMFNYTNVEEIMKGAAPIVKEIGPFHFDEWKEKVDIEDHDEDDTITYKKRDYFYFRPDKSGPGLTGEEVVVMPHLLMLSMATIVNNEKPAMLNMLGKAFNGIFDEPKDIFIRVKVLDLLFRGIIINCARTEFAPKAVCTALKKEGATGMTFEPNNQFRFSLFGMRNGTIDPHVVTVRRGIKNVMDVGKVIAIDGKTEQDVWRDKCNEFEGTDGTVFPPFLTEKDNLESFSDDLCRSFKPWYQKKTSYRGIKTNRYVANIGDFANDPELQCYCDSPDKCPPKGLMDLMKCMKAPMYASLPHYLDSDPQLLKDVKGLSPDANEHGIEIDFEPISGTPMVAKQRVQFNIILLKTDKMDLIKDLPGTMTPLFWIEEGLALNKTFVKMLKNQLFIPKRIVSVVKWLLAGVGFVGLVGSLVYQFKGKMINFALSPSSAQVTKVNPEINQQNQPKDISIIGESQNPPKVDM</sequence>
<organism>
    <name type="scientific">Ostrinia furnacalis</name>
    <name type="common">Asian corn borer</name>
    <dbReference type="NCBI Taxonomy" id="93504"/>
    <lineage>
        <taxon>Eukaryota</taxon>
        <taxon>Metazoa</taxon>
        <taxon>Ecdysozoa</taxon>
        <taxon>Arthropoda</taxon>
        <taxon>Hexapoda</taxon>
        <taxon>Insecta</taxon>
        <taxon>Pterygota</taxon>
        <taxon>Neoptera</taxon>
        <taxon>Endopterygota</taxon>
        <taxon>Lepidoptera</taxon>
        <taxon>Glossata</taxon>
        <taxon>Ditrysia</taxon>
        <taxon>Pyraloidea</taxon>
        <taxon>Crambidae</taxon>
        <taxon>Pyraustinae</taxon>
        <taxon>Ostrinia</taxon>
    </lineage>
</organism>